<accession>Q9P5U4</accession>
<accession>Q1K5K0</accession>
<proteinExistence type="inferred from homology"/>
<evidence type="ECO:0000250" key="1"/>
<evidence type="ECO:0000255" key="2"/>
<evidence type="ECO:0000305" key="3"/>
<protein>
    <recommendedName>
        <fullName>GrpE protein homolog, mitochondrial</fullName>
    </recommendedName>
</protein>
<organism>
    <name type="scientific">Neurospora crassa (strain ATCC 24698 / 74-OR23-1A / CBS 708.71 / DSM 1257 / FGSC 987)</name>
    <dbReference type="NCBI Taxonomy" id="367110"/>
    <lineage>
        <taxon>Eukaryota</taxon>
        <taxon>Fungi</taxon>
        <taxon>Dikarya</taxon>
        <taxon>Ascomycota</taxon>
        <taxon>Pezizomycotina</taxon>
        <taxon>Sordariomycetes</taxon>
        <taxon>Sordariomycetidae</taxon>
        <taxon>Sordariales</taxon>
        <taxon>Sordariaceae</taxon>
        <taxon>Neurospora</taxon>
    </lineage>
</organism>
<comment type="function">
    <text evidence="1">Essential component of the PAM complex, a complex required for the translocation of transit peptide-containing proteins from the inner membrane into the mitochondrial matrix in an ATP-dependent manner. Seems to control the nucleotide-dependent binding of mtHSP70 (hsp70-5) to substrate proteins (By similarity).</text>
</comment>
<comment type="subunit">
    <text evidence="1">Component of the PAM complex, at least composed of hsp70-5/ssc1, grpe/mge1, tim44, un-4/pam16, pam17 and tim14/pam18.</text>
</comment>
<comment type="subcellular location">
    <subcellularLocation>
        <location evidence="1">Mitochondrion matrix</location>
    </subcellularLocation>
</comment>
<comment type="similarity">
    <text evidence="3">Belongs to the GrpE family.</text>
</comment>
<feature type="transit peptide" description="Mitochondrion" evidence="2">
    <location>
        <begin position="1"/>
        <end status="unknown"/>
    </location>
</feature>
<feature type="chain" id="PRO_0000013044" description="GrpE protein homolog, mitochondrial">
    <location>
        <begin status="unknown"/>
        <end position="238"/>
    </location>
</feature>
<name>GRPE_NEUCR</name>
<sequence>MLRTALTRSSRALCSGARVAAQRPIASQIFQMQAARTAAPQLRSAARWYSAEAEGEKKADEGAEQKEGETDEVAALKKQLEAKDAEAREWKDKCLRTVADFRNLQERTARDVKQAKDFAIQKFAKDLVESVDNFERALSVVPQDKLKSEEQSEHLKDLVNLYEGLKMTESILLSTLKKHGLERIEPEGEVFNPNEHEATFMAPMPDKEHNVVFHVQQKGFKLNGRVLRPAQVGVVKNK</sequence>
<reference key="1">
    <citation type="journal article" date="2003" name="Nucleic Acids Res.">
        <title>What's in the genome of a filamentous fungus? Analysis of the Neurospora genome sequence.</title>
        <authorList>
            <person name="Mannhaupt G."/>
            <person name="Montrone C."/>
            <person name="Haase D."/>
            <person name="Mewes H.-W."/>
            <person name="Aign V."/>
            <person name="Hoheisel J.D."/>
            <person name="Fartmann B."/>
            <person name="Nyakatura G."/>
            <person name="Kempken F."/>
            <person name="Maier J."/>
            <person name="Schulte U."/>
        </authorList>
    </citation>
    <scope>NUCLEOTIDE SEQUENCE [LARGE SCALE GENOMIC DNA]</scope>
    <source>
        <strain>ATCC 24698 / 74-OR23-1A / CBS 708.71 / DSM 1257 / FGSC 987</strain>
    </source>
</reference>
<reference key="2">
    <citation type="journal article" date="2003" name="Nature">
        <title>The genome sequence of the filamentous fungus Neurospora crassa.</title>
        <authorList>
            <person name="Galagan J.E."/>
            <person name="Calvo S.E."/>
            <person name="Borkovich K.A."/>
            <person name="Selker E.U."/>
            <person name="Read N.D."/>
            <person name="Jaffe D.B."/>
            <person name="FitzHugh W."/>
            <person name="Ma L.-J."/>
            <person name="Smirnov S."/>
            <person name="Purcell S."/>
            <person name="Rehman B."/>
            <person name="Elkins T."/>
            <person name="Engels R."/>
            <person name="Wang S."/>
            <person name="Nielsen C.B."/>
            <person name="Butler J."/>
            <person name="Endrizzi M."/>
            <person name="Qui D."/>
            <person name="Ianakiev P."/>
            <person name="Bell-Pedersen D."/>
            <person name="Nelson M.A."/>
            <person name="Werner-Washburne M."/>
            <person name="Selitrennikoff C.P."/>
            <person name="Kinsey J.A."/>
            <person name="Braun E.L."/>
            <person name="Zelter A."/>
            <person name="Schulte U."/>
            <person name="Kothe G.O."/>
            <person name="Jedd G."/>
            <person name="Mewes H.-W."/>
            <person name="Staben C."/>
            <person name="Marcotte E."/>
            <person name="Greenberg D."/>
            <person name="Roy A."/>
            <person name="Foley K."/>
            <person name="Naylor J."/>
            <person name="Stange-Thomann N."/>
            <person name="Barrett R."/>
            <person name="Gnerre S."/>
            <person name="Kamal M."/>
            <person name="Kamvysselis M."/>
            <person name="Mauceli E.W."/>
            <person name="Bielke C."/>
            <person name="Rudd S."/>
            <person name="Frishman D."/>
            <person name="Krystofova S."/>
            <person name="Rasmussen C."/>
            <person name="Metzenberg R.L."/>
            <person name="Perkins D.D."/>
            <person name="Kroken S."/>
            <person name="Cogoni C."/>
            <person name="Macino G."/>
            <person name="Catcheside D.E.A."/>
            <person name="Li W."/>
            <person name="Pratt R.J."/>
            <person name="Osmani S.A."/>
            <person name="DeSouza C.P.C."/>
            <person name="Glass N.L."/>
            <person name="Orbach M.J."/>
            <person name="Berglund J.A."/>
            <person name="Voelker R."/>
            <person name="Yarden O."/>
            <person name="Plamann M."/>
            <person name="Seiler S."/>
            <person name="Dunlap J.C."/>
            <person name="Radford A."/>
            <person name="Aramayo R."/>
            <person name="Natvig D.O."/>
            <person name="Alex L.A."/>
            <person name="Mannhaupt G."/>
            <person name="Ebbole D.J."/>
            <person name="Freitag M."/>
            <person name="Paulsen I."/>
            <person name="Sachs M.S."/>
            <person name="Lander E.S."/>
            <person name="Nusbaum C."/>
            <person name="Birren B.W."/>
        </authorList>
    </citation>
    <scope>NUCLEOTIDE SEQUENCE [LARGE SCALE GENOMIC DNA]</scope>
    <source>
        <strain>ATCC 24698 / 74-OR23-1A / CBS 708.71 / DSM 1257 / FGSC 987</strain>
    </source>
</reference>
<dbReference type="EMBL" id="AL355932">
    <property type="protein sequence ID" value="CAB91427.1"/>
    <property type="molecule type" value="Genomic_DNA"/>
</dbReference>
<dbReference type="EMBL" id="CM002237">
    <property type="protein sequence ID" value="EAA27729.1"/>
    <property type="molecule type" value="Genomic_DNA"/>
</dbReference>
<dbReference type="PIR" id="T49626">
    <property type="entry name" value="T49626"/>
</dbReference>
<dbReference type="RefSeq" id="XP_956965.1">
    <property type="nucleotide sequence ID" value="XM_951872.3"/>
</dbReference>
<dbReference type="SMR" id="Q9P5U4"/>
<dbReference type="FunCoup" id="Q9P5U4">
    <property type="interactions" value="831"/>
</dbReference>
<dbReference type="STRING" id="367110.Q9P5U4"/>
<dbReference type="PaxDb" id="5141-EFNCRP00000001639"/>
<dbReference type="EnsemblFungi" id="EAA27729">
    <property type="protein sequence ID" value="EAA27729"/>
    <property type="gene ID" value="NCU01516"/>
</dbReference>
<dbReference type="GeneID" id="3873128"/>
<dbReference type="KEGG" id="ncr:NCU01516"/>
<dbReference type="VEuPathDB" id="FungiDB:NCU01516"/>
<dbReference type="HOGENOM" id="CLU_057217_0_0_1"/>
<dbReference type="InParanoid" id="Q9P5U4"/>
<dbReference type="OrthoDB" id="201635at2759"/>
<dbReference type="Proteomes" id="UP000001805">
    <property type="component" value="Chromosome 6, Linkage Group II"/>
</dbReference>
<dbReference type="GO" id="GO:0001405">
    <property type="term" value="C:PAM complex, Tim23 associated import motor"/>
    <property type="evidence" value="ECO:0000318"/>
    <property type="project" value="GO_Central"/>
</dbReference>
<dbReference type="GO" id="GO:0000774">
    <property type="term" value="F:adenyl-nucleotide exchange factor activity"/>
    <property type="evidence" value="ECO:0000318"/>
    <property type="project" value="GO_Central"/>
</dbReference>
<dbReference type="GO" id="GO:0042803">
    <property type="term" value="F:protein homodimerization activity"/>
    <property type="evidence" value="ECO:0007669"/>
    <property type="project" value="InterPro"/>
</dbReference>
<dbReference type="GO" id="GO:0051087">
    <property type="term" value="F:protein-folding chaperone binding"/>
    <property type="evidence" value="ECO:0007669"/>
    <property type="project" value="InterPro"/>
</dbReference>
<dbReference type="GO" id="GO:0051082">
    <property type="term" value="F:unfolded protein binding"/>
    <property type="evidence" value="ECO:0000318"/>
    <property type="project" value="GO_Central"/>
</dbReference>
<dbReference type="GO" id="GO:0030150">
    <property type="term" value="P:protein import into mitochondrial matrix"/>
    <property type="evidence" value="ECO:0000318"/>
    <property type="project" value="GO_Central"/>
</dbReference>
<dbReference type="GO" id="GO:0042026">
    <property type="term" value="P:protein refolding"/>
    <property type="evidence" value="ECO:0007669"/>
    <property type="project" value="EnsemblFungi"/>
</dbReference>
<dbReference type="CDD" id="cd00446">
    <property type="entry name" value="GrpE"/>
    <property type="match status" value="1"/>
</dbReference>
<dbReference type="FunFam" id="2.30.22.10:FF:000002">
    <property type="entry name" value="GrpE protein homolog"/>
    <property type="match status" value="1"/>
</dbReference>
<dbReference type="FunFam" id="3.90.20.20:FF:000013">
    <property type="entry name" value="GrpE protein homolog"/>
    <property type="match status" value="1"/>
</dbReference>
<dbReference type="Gene3D" id="3.90.20.20">
    <property type="match status" value="1"/>
</dbReference>
<dbReference type="Gene3D" id="2.30.22.10">
    <property type="entry name" value="Head domain of nucleotide exchange factor GrpE"/>
    <property type="match status" value="1"/>
</dbReference>
<dbReference type="HAMAP" id="MF_01151">
    <property type="entry name" value="GrpE"/>
    <property type="match status" value="1"/>
</dbReference>
<dbReference type="InterPro" id="IPR000740">
    <property type="entry name" value="GrpE"/>
</dbReference>
<dbReference type="InterPro" id="IPR013805">
    <property type="entry name" value="GrpE_coiled_coil"/>
</dbReference>
<dbReference type="InterPro" id="IPR009012">
    <property type="entry name" value="GrpE_head"/>
</dbReference>
<dbReference type="PANTHER" id="PTHR21237">
    <property type="entry name" value="GRPE PROTEIN"/>
    <property type="match status" value="1"/>
</dbReference>
<dbReference type="PANTHER" id="PTHR21237:SF23">
    <property type="entry name" value="GRPE PROTEIN HOMOLOG, MITOCHONDRIAL"/>
    <property type="match status" value="1"/>
</dbReference>
<dbReference type="Pfam" id="PF01025">
    <property type="entry name" value="GrpE"/>
    <property type="match status" value="1"/>
</dbReference>
<dbReference type="PRINTS" id="PR00773">
    <property type="entry name" value="GRPEPROTEIN"/>
</dbReference>
<dbReference type="SUPFAM" id="SSF58014">
    <property type="entry name" value="Coiled-coil domain of nucleotide exchange factor GrpE"/>
    <property type="match status" value="1"/>
</dbReference>
<dbReference type="SUPFAM" id="SSF51064">
    <property type="entry name" value="Head domain of nucleotide exchange factor GrpE"/>
    <property type="match status" value="1"/>
</dbReference>
<dbReference type="PROSITE" id="PS01071">
    <property type="entry name" value="GRPE"/>
    <property type="match status" value="1"/>
</dbReference>
<gene>
    <name type="primary">grpe</name>
    <name type="synonym">mge1</name>
    <name type="ORF">B5O22.080</name>
    <name type="ORF">NCU01516</name>
</gene>
<keyword id="KW-0143">Chaperone</keyword>
<keyword id="KW-0496">Mitochondrion</keyword>
<keyword id="KW-1185">Reference proteome</keyword>
<keyword id="KW-0809">Transit peptide</keyword>